<feature type="initiator methionine" description="Removed" evidence="5">
    <location>
        <position position="1"/>
    </location>
</feature>
<feature type="chain" id="PRO_0000072337" description="Small VCP/p97-interacting protein">
    <location>
        <begin position="2"/>
        <end position="77"/>
    </location>
</feature>
<feature type="region of interest" description="Disordered" evidence="2">
    <location>
        <begin position="1"/>
        <end position="20"/>
    </location>
</feature>
<feature type="region of interest" description="VCP/p97-interacting motif (VIM)" evidence="4">
    <location>
        <begin position="21"/>
        <end position="33"/>
    </location>
</feature>
<feature type="region of interest" description="Disordered" evidence="2">
    <location>
        <begin position="25"/>
        <end position="77"/>
    </location>
</feature>
<feature type="compositionally biased region" description="Basic and acidic residues" evidence="2">
    <location>
        <begin position="25"/>
        <end position="37"/>
    </location>
</feature>
<feature type="modified residue" description="Phosphoserine" evidence="10">
    <location>
        <position position="46"/>
    </location>
</feature>
<feature type="lipid moiety-binding region" description="N-myristoyl glycine" evidence="5 8">
    <location>
        <position position="2"/>
    </location>
</feature>
<feature type="lipid moiety-binding region" description="S-palmitoyl cysteine" evidence="8">
    <location>
        <position position="4"/>
    </location>
</feature>
<feature type="lipid moiety-binding region" description="S-palmitoyl cysteine" evidence="8">
    <location>
        <position position="7"/>
    </location>
</feature>
<feature type="sequence variant" id="VAR_090200" description="Found in a patient with frontotemporal dementia; uncertain significance." evidence="6">
    <original>S</original>
    <variation>L</variation>
    <location>
        <position position="77"/>
    </location>
</feature>
<feature type="mutagenesis site" description="Loss of myristoylation. Does not localize to membranes but is exclusively localized in the cytosol. Has no effect on protein degradation by ERAD pathway." evidence="3 8">
    <original>G</original>
    <variation>A</variation>
    <location>
        <position position="2"/>
    </location>
</feature>
<feature type="mutagenesis site" description="Decreased palmitoylation. Loss of palmitoylation; when associated in cis with S-7." evidence="8">
    <original>C</original>
    <variation>S</variation>
    <location>
        <position position="4"/>
    </location>
</feature>
<feature type="mutagenesis site" description="Decreased palmitoylation. Loss of palmitoylation; when associated in cis with S-4." evidence="8">
    <original>C</original>
    <variation>S</variation>
    <location>
        <position position="7"/>
    </location>
</feature>
<dbReference type="EMBL" id="AF527534">
    <property type="protein sequence ID" value="AAM88869.1"/>
    <property type="molecule type" value="mRNA"/>
</dbReference>
<dbReference type="CCDS" id="CCDS41627.1"/>
<dbReference type="RefSeq" id="NP_001307269.1">
    <property type="nucleotide sequence ID" value="NM_001320340.1"/>
</dbReference>
<dbReference type="RefSeq" id="NP_001307271.1">
    <property type="nucleotide sequence ID" value="NM_001320342.1"/>
</dbReference>
<dbReference type="RefSeq" id="NP_683691.1">
    <property type="nucleotide sequence ID" value="NM_148893.3"/>
</dbReference>
<dbReference type="BMRB" id="Q8NHG7"/>
<dbReference type="SMR" id="Q8NHG7"/>
<dbReference type="BioGRID" id="129222">
    <property type="interactions" value="30"/>
</dbReference>
<dbReference type="CORUM" id="Q8NHG7"/>
<dbReference type="FunCoup" id="Q8NHG7">
    <property type="interactions" value="366"/>
</dbReference>
<dbReference type="IntAct" id="Q8NHG7">
    <property type="interactions" value="17"/>
</dbReference>
<dbReference type="MINT" id="Q8NHG7"/>
<dbReference type="STRING" id="9606.ENSP00000346130"/>
<dbReference type="GlyCosmos" id="Q8NHG7">
    <property type="glycosylation" value="1 site, 1 glycan"/>
</dbReference>
<dbReference type="GlyGen" id="Q8NHG7">
    <property type="glycosylation" value="2 sites, 1 O-linked glycan (1 site)"/>
</dbReference>
<dbReference type="iPTMnet" id="Q8NHG7"/>
<dbReference type="PhosphoSitePlus" id="Q8NHG7"/>
<dbReference type="SwissPalm" id="Q8NHG7"/>
<dbReference type="BioMuta" id="SVIP"/>
<dbReference type="jPOST" id="Q8NHG7"/>
<dbReference type="MassIVE" id="Q8NHG7"/>
<dbReference type="PaxDb" id="9606-ENSP00000346130"/>
<dbReference type="PeptideAtlas" id="Q8NHG7"/>
<dbReference type="ProteomicsDB" id="73706"/>
<dbReference type="Pumba" id="Q8NHG7"/>
<dbReference type="Antibodypedia" id="48732">
    <property type="antibodies" value="8 antibodies from 7 providers"/>
</dbReference>
<dbReference type="DNASU" id="258010"/>
<dbReference type="Ensembl" id="ENST00000354193.5">
    <property type="protein sequence ID" value="ENSP00000346130.4"/>
    <property type="gene ID" value="ENSG00000198168.9"/>
</dbReference>
<dbReference type="GeneID" id="258010"/>
<dbReference type="KEGG" id="hsa:258010"/>
<dbReference type="MANE-Select" id="ENST00000354193.5">
    <property type="protein sequence ID" value="ENSP00000346130.4"/>
    <property type="RefSeq nucleotide sequence ID" value="NM_148893.3"/>
    <property type="RefSeq protein sequence ID" value="NP_683691.1"/>
</dbReference>
<dbReference type="UCSC" id="uc001mqp.5">
    <property type="organism name" value="human"/>
</dbReference>
<dbReference type="AGR" id="HGNC:25238"/>
<dbReference type="CTD" id="258010"/>
<dbReference type="DisGeNET" id="258010"/>
<dbReference type="GeneCards" id="SVIP"/>
<dbReference type="HGNC" id="HGNC:25238">
    <property type="gene designation" value="SVIP"/>
</dbReference>
<dbReference type="HPA" id="ENSG00000198168">
    <property type="expression patterns" value="Low tissue specificity"/>
</dbReference>
<dbReference type="MIM" id="620965">
    <property type="type" value="gene"/>
</dbReference>
<dbReference type="neXtProt" id="NX_Q8NHG7"/>
<dbReference type="OpenTargets" id="ENSG00000198168"/>
<dbReference type="PharmGKB" id="PA164726394"/>
<dbReference type="VEuPathDB" id="HostDB:ENSG00000198168"/>
<dbReference type="eggNOG" id="ENOG502S5MU">
    <property type="taxonomic scope" value="Eukaryota"/>
</dbReference>
<dbReference type="GeneTree" id="ENSGT00390000007067"/>
<dbReference type="HOGENOM" id="CLU_174267_1_0_1"/>
<dbReference type="InParanoid" id="Q8NHG7"/>
<dbReference type="OMA" id="GMCLPCF"/>
<dbReference type="PAN-GO" id="Q8NHG7">
    <property type="GO annotations" value="6 GO annotations based on evolutionary models"/>
</dbReference>
<dbReference type="PhylomeDB" id="Q8NHG7"/>
<dbReference type="PathwayCommons" id="Q8NHG7"/>
<dbReference type="Reactome" id="R-HSA-6798695">
    <property type="pathway name" value="Neutrophil degranulation"/>
</dbReference>
<dbReference type="SignaLink" id="Q8NHG7"/>
<dbReference type="SIGNOR" id="Q8NHG7"/>
<dbReference type="BioGRID-ORCS" id="258010">
    <property type="hits" value="18 hits in 1140 CRISPR screens"/>
</dbReference>
<dbReference type="CD-CODE" id="FB4E32DD">
    <property type="entry name" value="Presynaptic clusters and postsynaptic densities"/>
</dbReference>
<dbReference type="ChiTaRS" id="SVIP">
    <property type="organism name" value="human"/>
</dbReference>
<dbReference type="GenomeRNAi" id="258010"/>
<dbReference type="Pharos" id="Q8NHG7">
    <property type="development level" value="Tbio"/>
</dbReference>
<dbReference type="PRO" id="PR:Q8NHG7"/>
<dbReference type="Proteomes" id="UP000005640">
    <property type="component" value="Chromosome 11"/>
</dbReference>
<dbReference type="RNAct" id="Q8NHG7">
    <property type="molecule type" value="protein"/>
</dbReference>
<dbReference type="Bgee" id="ENSG00000198168">
    <property type="expression patterns" value="Expressed in C1 segment of cervical spinal cord and 186 other cell types or tissues"/>
</dbReference>
<dbReference type="GO" id="GO:0005789">
    <property type="term" value="C:endoplasmic reticulum membrane"/>
    <property type="evidence" value="ECO:0000314"/>
    <property type="project" value="UniProtKB"/>
</dbReference>
<dbReference type="GO" id="GO:0070062">
    <property type="term" value="C:extracellular exosome"/>
    <property type="evidence" value="ECO:0007005"/>
    <property type="project" value="UniProtKB"/>
</dbReference>
<dbReference type="GO" id="GO:0000139">
    <property type="term" value="C:Golgi membrane"/>
    <property type="evidence" value="ECO:0007669"/>
    <property type="project" value="UniProtKB-SubCell"/>
</dbReference>
<dbReference type="GO" id="GO:0005765">
    <property type="term" value="C:lysosomal membrane"/>
    <property type="evidence" value="ECO:0007669"/>
    <property type="project" value="UniProtKB-SubCell"/>
</dbReference>
<dbReference type="GO" id="GO:0016020">
    <property type="term" value="C:membrane"/>
    <property type="evidence" value="ECO:0000314"/>
    <property type="project" value="ParkinsonsUK-UCL"/>
</dbReference>
<dbReference type="GO" id="GO:0005886">
    <property type="term" value="C:plasma membrane"/>
    <property type="evidence" value="ECO:0000304"/>
    <property type="project" value="Reactome"/>
</dbReference>
<dbReference type="GO" id="GO:0030667">
    <property type="term" value="C:secretory granule membrane"/>
    <property type="evidence" value="ECO:0000304"/>
    <property type="project" value="Reactome"/>
</dbReference>
<dbReference type="GO" id="GO:0030868">
    <property type="term" value="C:smooth endoplasmic reticulum membrane"/>
    <property type="evidence" value="ECO:0007669"/>
    <property type="project" value="UniProtKB-SubCell"/>
</dbReference>
<dbReference type="GO" id="GO:0070821">
    <property type="term" value="C:tertiary granule membrane"/>
    <property type="evidence" value="ECO:0000304"/>
    <property type="project" value="Reactome"/>
</dbReference>
<dbReference type="GO" id="GO:0051117">
    <property type="term" value="F:ATPase binding"/>
    <property type="evidence" value="ECO:0000353"/>
    <property type="project" value="ParkinsonsUK-UCL"/>
</dbReference>
<dbReference type="GO" id="GO:1904293">
    <property type="term" value="P:negative regulation of ERAD pathway"/>
    <property type="evidence" value="ECO:0000315"/>
    <property type="project" value="UniProtKB"/>
</dbReference>
<dbReference type="GO" id="GO:0031333">
    <property type="term" value="P:negative regulation of protein-containing complex assembly"/>
    <property type="evidence" value="ECO:0000315"/>
    <property type="project" value="UniProtKB"/>
</dbReference>
<dbReference type="GO" id="GO:1904153">
    <property type="term" value="P:negative regulation of retrograde protein transport, ER to cytosol"/>
    <property type="evidence" value="ECO:0000315"/>
    <property type="project" value="ParkinsonsUK-UCL"/>
</dbReference>
<dbReference type="GO" id="GO:1904240">
    <property type="term" value="P:negative regulation of VCP-NPL4-UFD1 AAA ATPase complex assembly"/>
    <property type="evidence" value="ECO:0000318"/>
    <property type="project" value="GO_Central"/>
</dbReference>
<dbReference type="GO" id="GO:0010508">
    <property type="term" value="P:positive regulation of autophagy"/>
    <property type="evidence" value="ECO:0000315"/>
    <property type="project" value="UniProtKB"/>
</dbReference>
<dbReference type="GO" id="GO:1903061">
    <property type="term" value="P:positive regulation of protein lipidation"/>
    <property type="evidence" value="ECO:0000315"/>
    <property type="project" value="UniProtKB"/>
</dbReference>
<dbReference type="InterPro" id="IPR031632">
    <property type="entry name" value="SVIP"/>
</dbReference>
<dbReference type="InterPro" id="IPR055366">
    <property type="entry name" value="SVIP_metazoa"/>
</dbReference>
<dbReference type="PANTHER" id="PTHR35269">
    <property type="entry name" value="SMALL VCP/P97-INTERACTING PROTEIN"/>
    <property type="match status" value="1"/>
</dbReference>
<dbReference type="PANTHER" id="PTHR35269:SF1">
    <property type="entry name" value="SMALL VCP_P97-INTERACTING PROTEIN"/>
    <property type="match status" value="1"/>
</dbReference>
<dbReference type="Pfam" id="PF15811">
    <property type="entry name" value="SVIP"/>
    <property type="match status" value="1"/>
</dbReference>
<protein>
    <recommendedName>
        <fullName>Small VCP/p97-interacting protein</fullName>
    </recommendedName>
</protein>
<sequence length="77" mass="8443">MGLCFPCPGESAPPTPDLEEKRAKLAEAAERRQKEAASRGILDVQSVQEKRKKKEKIEKQIATSGPPPEGGLRWTVS</sequence>
<organism>
    <name type="scientific">Homo sapiens</name>
    <name type="common">Human</name>
    <dbReference type="NCBI Taxonomy" id="9606"/>
    <lineage>
        <taxon>Eukaryota</taxon>
        <taxon>Metazoa</taxon>
        <taxon>Chordata</taxon>
        <taxon>Craniata</taxon>
        <taxon>Vertebrata</taxon>
        <taxon>Euteleostomi</taxon>
        <taxon>Mammalia</taxon>
        <taxon>Eutheria</taxon>
        <taxon>Euarchontoglires</taxon>
        <taxon>Primates</taxon>
        <taxon>Haplorrhini</taxon>
        <taxon>Catarrhini</taxon>
        <taxon>Hominidae</taxon>
        <taxon>Homo</taxon>
    </lineage>
</organism>
<comment type="function">
    <text evidence="3 7">Negative regulator of the ER-associated degradation pathway (ERAD) of misfolded proteins. It competes with AMFR/gp78 for binding VCP/p97, and inhibits AMFR/gp78-VCP/p97 complex formation that is required for degradation of ERAD substrates (PubMed:17872946). Involved in the regulation of adrenal cortisol and dehydroepiandrosterone (DHEA) biosynthesis (PubMed:35042898).</text>
</comment>
<comment type="subunit">
    <text evidence="3 4">Interacts (via VIM motif) with VCP/p97 (PubMed:17872946, PubMed:21896481). Forms a complex with VCP/p97 and DERL1 (PubMed:17872946).</text>
</comment>
<comment type="interaction">
    <interactant intactId="EBI-2513231">
        <id>Q8NHG7</id>
    </interactant>
    <interactant intactId="EBI-1993899">
        <id>Q9BZV1</id>
        <label>UBXN6</label>
    </interactant>
    <organismsDiffer>false</organismsDiffer>
    <experiments>3</experiments>
</comment>
<comment type="subcellular location">
    <subcellularLocation>
        <location evidence="3">Membrane</location>
        <topology evidence="3">Lipid-anchor</topology>
    </subcellularLocation>
    <subcellularLocation>
        <location evidence="1">Smooth endoplasmic reticulum membrane</location>
        <topology evidence="1">Peripheral membrane protein</topology>
    </subcellularLocation>
    <subcellularLocation>
        <location evidence="1">Golgi apparatus membrane</location>
        <topology evidence="1">Peripheral membrane protein</topology>
    </subcellularLocation>
    <subcellularLocation>
        <location evidence="1">Cell membrane</location>
        <topology evidence="1">Peripheral membrane protein</topology>
    </subcellularLocation>
    <subcellularLocation>
        <location evidence="7">Lysosome membrane</location>
    </subcellularLocation>
</comment>
<comment type="similarity">
    <text evidence="9">Belongs to the SVIP family.</text>
</comment>
<gene>
    <name type="primary">SVIP</name>
</gene>
<name>SVIP_HUMAN</name>
<keyword id="KW-1003">Cell membrane</keyword>
<keyword id="KW-0256">Endoplasmic reticulum</keyword>
<keyword id="KW-0333">Golgi apparatus</keyword>
<keyword id="KW-0449">Lipoprotein</keyword>
<keyword id="KW-0458">Lysosome</keyword>
<keyword id="KW-0472">Membrane</keyword>
<keyword id="KW-0519">Myristate</keyword>
<keyword id="KW-0564">Palmitate</keyword>
<keyword id="KW-0597">Phosphoprotein</keyword>
<keyword id="KW-1267">Proteomics identification</keyword>
<keyword id="KW-1185">Reference proteome</keyword>
<reference key="1">
    <citation type="submission" date="2002-07" db="EMBL/GenBank/DDBJ databases">
        <authorList>
            <person name="Guo J.H."/>
            <person name="Yu L."/>
        </authorList>
    </citation>
    <scope>NUCLEOTIDE SEQUENCE [LARGE SCALE MRNA]</scope>
    <source>
        <tissue>Ovary</tissue>
    </source>
</reference>
<reference key="2">
    <citation type="journal article" date="2007" name="J. Biol. Chem.">
        <title>Identification of SVIP as an endogenous inhibitor of endoplasmic reticulum-associated degradation.</title>
        <authorList>
            <person name="Ballar P."/>
            <person name="Zhong Y."/>
            <person name="Nagahama M."/>
            <person name="Tagaya M."/>
            <person name="Shen Y."/>
            <person name="Fang S."/>
        </authorList>
    </citation>
    <scope>FUNCTION</scope>
    <scope>SUBCELLULAR LOCATION</scope>
    <scope>MUTAGENESIS OF GLY-2</scope>
    <scope>INTERACTION WITH VCP AND DERL1</scope>
</reference>
<reference key="3">
    <citation type="journal article" date="2011" name="J. Biol. Chem.">
        <title>The general definition of the p97/valosin-containing protein (VCP)-interacting motif (VIM) delineates a new family of p97 cofactors.</title>
        <authorList>
            <person name="Stapf C."/>
            <person name="Cartwright E."/>
            <person name="Bycroft M."/>
            <person name="Hofmann K."/>
            <person name="Buchberger A."/>
        </authorList>
    </citation>
    <scope>INTERACTION WITH VCP</scope>
    <scope>VIM MOTIF</scope>
</reference>
<reference key="4">
    <citation type="journal article" date="2013" name="J. Proteome Res.">
        <title>Toward a comprehensive characterization of a human cancer cell phosphoproteome.</title>
        <authorList>
            <person name="Zhou H."/>
            <person name="Di Palma S."/>
            <person name="Preisinger C."/>
            <person name="Peng M."/>
            <person name="Polat A.N."/>
            <person name="Heck A.J."/>
            <person name="Mohammed S."/>
        </authorList>
    </citation>
    <scope>PHOSPHORYLATION [LARGE SCALE ANALYSIS] AT SER-46</scope>
    <scope>IDENTIFICATION BY MASS SPECTROMETRY [LARGE SCALE ANALYSIS]</scope>
    <source>
        <tissue>Erythroleukemia</tissue>
    </source>
</reference>
<reference key="5">
    <citation type="journal article" date="2014" name="Nat. Commun.">
        <title>Global profiling of co- and post-translationally N-myristoylated proteomes in human cells.</title>
        <authorList>
            <person name="Thinon E."/>
            <person name="Serwa R.A."/>
            <person name="Broncel M."/>
            <person name="Brannigan J.A."/>
            <person name="Brassat U."/>
            <person name="Wright M.H."/>
            <person name="Heal W.P."/>
            <person name="Wilkinson A.J."/>
            <person name="Mann D.J."/>
            <person name="Tate E.W."/>
        </authorList>
    </citation>
    <scope>MYRISTOYLATION AT GLY-2</scope>
    <scope>CLEAVAGE OF INITIATOR METHIONINE</scope>
    <scope>IDENTIFICATION BY MASS SPECTROMETRY</scope>
</reference>
<reference key="6">
    <citation type="journal article" date="2022" name="Sci. Rep.">
        <title>Novel regulation mechanism of adrenal cortisol and DHEA biosynthesis via the endogen ERAD inhibitor small VCP-interacting protein.</title>
        <authorList>
            <person name="Ilhan R."/>
            <person name="Uener G."/>
            <person name="Yilmaz S."/>
            <person name="Atalay Sahar E."/>
            <person name="Cayli S."/>
            <person name="Erzurumlu Y."/>
            <person name="Gozen O."/>
            <person name="Ballar Kirmizibayrak P."/>
        </authorList>
    </citation>
    <scope>SUBCELLULAR LOCATION</scope>
    <scope>FUNCTION</scope>
</reference>
<reference key="7">
    <citation type="journal article" date="2024" name="Cell. Death. Discov.">
        <title>Fatty links between multisystem proteinopathy and small VCP-interacting protein.</title>
        <authorList>
            <person name="Ramzan F."/>
            <person name="Kumar A."/>
            <person name="Abrar F."/>
            <person name="Gray R.A.V."/>
            <person name="Campbell Z.E."/>
            <person name="Liao L.M.Q."/>
            <person name="Dang A."/>
            <person name="Akanni O."/>
            <person name="Guyn C."/>
            <person name="Martin D.D.O."/>
        </authorList>
    </citation>
    <scope>MYRISTOYLATION AT GLY-2</scope>
    <scope>PALMITOYLATION AT CYS-4 AND CYS-7</scope>
    <scope>MUTAGENESIS OF GLY-2; CYS-4 AND CYS-7</scope>
</reference>
<reference key="8">
    <citation type="journal article" date="2021" name="Nat. Commun.">
        <title>SVIP is a molecular determinant of lysosomal dynamic stability, neurodegeneration and lifespan.</title>
        <authorList>
            <person name="Johnson A.E."/>
            <person name="Orr B.O."/>
            <person name="Fetter R.D."/>
            <person name="Moughamian A.J."/>
            <person name="Primeaux L.A."/>
            <person name="Geier E.G."/>
            <person name="Yokoyama J.S."/>
            <person name="Miller B.L."/>
            <person name="Davis G.W."/>
        </authorList>
    </citation>
    <scope>VARIANT LEU-77</scope>
</reference>
<proteinExistence type="evidence at protein level"/>
<accession>Q8NHG7</accession>
<evidence type="ECO:0000250" key="1">
    <source>
        <dbReference type="UniProtKB" id="P0C0A9"/>
    </source>
</evidence>
<evidence type="ECO:0000256" key="2">
    <source>
        <dbReference type="SAM" id="MobiDB-lite"/>
    </source>
</evidence>
<evidence type="ECO:0000269" key="3">
    <source>
    </source>
</evidence>
<evidence type="ECO:0000269" key="4">
    <source>
    </source>
</evidence>
<evidence type="ECO:0000269" key="5">
    <source>
    </source>
</evidence>
<evidence type="ECO:0000269" key="6">
    <source>
    </source>
</evidence>
<evidence type="ECO:0000269" key="7">
    <source>
    </source>
</evidence>
<evidence type="ECO:0000269" key="8">
    <source>
    </source>
</evidence>
<evidence type="ECO:0000305" key="9"/>
<evidence type="ECO:0007744" key="10">
    <source>
    </source>
</evidence>